<proteinExistence type="evidence at protein level"/>
<evidence type="ECO:0000255" key="1"/>
<evidence type="ECO:0000256" key="2">
    <source>
        <dbReference type="SAM" id="MobiDB-lite"/>
    </source>
</evidence>
<evidence type="ECO:0000269" key="3">
    <source>
    </source>
</evidence>
<evidence type="ECO:0000269" key="4">
    <source>
    </source>
</evidence>
<evidence type="ECO:0000269" key="5">
    <source>
    </source>
</evidence>
<evidence type="ECO:0000269" key="6">
    <source>
    </source>
</evidence>
<evidence type="ECO:0000269" key="7">
    <source>
    </source>
</evidence>
<evidence type="ECO:0000269" key="8">
    <source>
    </source>
</evidence>
<evidence type="ECO:0000269" key="9">
    <source>
    </source>
</evidence>
<evidence type="ECO:0000269" key="10">
    <source>
    </source>
</evidence>
<evidence type="ECO:0000269" key="11">
    <source>
    </source>
</evidence>
<evidence type="ECO:0000303" key="12">
    <source>
    </source>
</evidence>
<evidence type="ECO:0000303" key="13">
    <source>
    </source>
</evidence>
<evidence type="ECO:0000303" key="14">
    <source>
    </source>
</evidence>
<evidence type="ECO:0000305" key="15"/>
<evidence type="ECO:0000305" key="16">
    <source>
    </source>
</evidence>
<evidence type="ECO:0000305" key="17">
    <source>
    </source>
</evidence>
<evidence type="ECO:0000305" key="18">
    <source>
    </source>
</evidence>
<evidence type="ECO:0000312" key="19">
    <source>
        <dbReference type="HGNC" id="HGNC:15455"/>
    </source>
</evidence>
<name>MBTP2_HUMAN</name>
<gene>
    <name evidence="13 19" type="primary">MBTPS2</name>
    <name evidence="12 14" type="synonym">S2P</name>
</gene>
<keyword id="KW-0153">Cholesterol metabolism</keyword>
<keyword id="KW-0963">Cytoplasm</keyword>
<keyword id="KW-0225">Disease variant</keyword>
<keyword id="KW-0325">Glycoprotein</keyword>
<keyword id="KW-0333">Golgi apparatus</keyword>
<keyword id="KW-0378">Hydrolase</keyword>
<keyword id="KW-0977">Ichthyosis</keyword>
<keyword id="KW-0443">Lipid metabolism</keyword>
<keyword id="KW-0472">Membrane</keyword>
<keyword id="KW-0479">Metal-binding</keyword>
<keyword id="KW-0482">Metalloprotease</keyword>
<keyword id="KW-1065">Osteogenesis imperfecta</keyword>
<keyword id="KW-1007">Palmoplantar keratoderma</keyword>
<keyword id="KW-0645">Protease</keyword>
<keyword id="KW-1267">Proteomics identification</keyword>
<keyword id="KW-1185">Reference proteome</keyword>
<keyword id="KW-0753">Steroid metabolism</keyword>
<keyword id="KW-1207">Sterol metabolism</keyword>
<keyword id="KW-0812">Transmembrane</keyword>
<keyword id="KW-1133">Transmembrane helix</keyword>
<keyword id="KW-0862">Zinc</keyword>
<organism>
    <name type="scientific">Homo sapiens</name>
    <name type="common">Human</name>
    <dbReference type="NCBI Taxonomy" id="9606"/>
    <lineage>
        <taxon>Eukaryota</taxon>
        <taxon>Metazoa</taxon>
        <taxon>Chordata</taxon>
        <taxon>Craniata</taxon>
        <taxon>Vertebrata</taxon>
        <taxon>Euteleostomi</taxon>
        <taxon>Mammalia</taxon>
        <taxon>Eutheria</taxon>
        <taxon>Euarchontoglires</taxon>
        <taxon>Primates</taxon>
        <taxon>Haplorrhini</taxon>
        <taxon>Catarrhini</taxon>
        <taxon>Hominidae</taxon>
        <taxon>Homo</taxon>
    </lineage>
</organism>
<feature type="chain" id="PRO_0000088482" description="Membrane-bound transcription factor site-2 protease">
    <location>
        <begin position="1"/>
        <end position="519"/>
    </location>
</feature>
<feature type="topological domain" description="Cytoplasmic" evidence="3">
    <location>
        <begin position="1"/>
        <end position="3"/>
    </location>
</feature>
<feature type="transmembrane region" description="Helical" evidence="1">
    <location>
        <begin position="4"/>
        <end position="24"/>
    </location>
</feature>
<feature type="topological domain" description="Lumenal" evidence="16">
    <location>
        <begin position="25"/>
        <end position="74"/>
    </location>
</feature>
<feature type="transmembrane region" description="Helical" evidence="1">
    <location>
        <begin position="75"/>
        <end position="95"/>
    </location>
</feature>
<feature type="transmembrane region" description="Helical" evidence="1">
    <location>
        <begin position="96"/>
        <end position="107"/>
    </location>
</feature>
<feature type="topological domain" description="Lumenal" evidence="16">
    <location>
        <begin position="108"/>
        <end position="144"/>
    </location>
</feature>
<feature type="transmembrane region" description="Helical" evidence="1">
    <location>
        <begin position="145"/>
        <end position="169"/>
    </location>
</feature>
<feature type="transmembrane region" description="Helical" evidence="1">
    <location>
        <begin position="174"/>
        <end position="186"/>
    </location>
</feature>
<feature type="transmembrane region" description="Helical" evidence="1">
    <location>
        <begin position="187"/>
        <end position="209"/>
    </location>
</feature>
<feature type="transmembrane region" description="Helical" evidence="1">
    <location>
        <begin position="229"/>
        <end position="251"/>
    </location>
</feature>
<feature type="topological domain" description="Lumenal" evidence="16">
    <location>
        <begin position="252"/>
        <end position="446"/>
    </location>
</feature>
<feature type="transmembrane region" description="Helical" evidence="1">
    <location>
        <begin position="447"/>
        <end position="464"/>
    </location>
</feature>
<feature type="transmembrane region" description="Helical" evidence="1">
    <location>
        <begin position="465"/>
        <end position="476"/>
    </location>
</feature>
<feature type="topological domain" description="Lumenal" evidence="1">
    <location>
        <begin position="477"/>
        <end position="492"/>
    </location>
</feature>
<feature type="transmembrane region" description="Helical" evidence="1">
    <location>
        <begin position="493"/>
        <end position="513"/>
    </location>
</feature>
<feature type="topological domain" description="Cytoplasmic" evidence="1">
    <location>
        <begin position="514"/>
        <end position="519"/>
    </location>
</feature>
<feature type="region of interest" description="Disordered" evidence="2">
    <location>
        <begin position="115"/>
        <end position="135"/>
    </location>
</feature>
<feature type="active site">
    <location>
        <position position="172"/>
    </location>
</feature>
<feature type="binding site">
    <location>
        <position position="171"/>
    </location>
    <ligand>
        <name>Zn(2+)</name>
        <dbReference type="ChEBI" id="CHEBI:29105"/>
        <note>catalytic</note>
    </ligand>
</feature>
<feature type="binding site">
    <location>
        <position position="175"/>
    </location>
    <ligand>
        <name>Zn(2+)</name>
        <dbReference type="ChEBI" id="CHEBI:29105"/>
        <note>catalytic</note>
    </ligand>
</feature>
<feature type="glycosylation site" description="N-linked (GlcNAc...) asparagine" evidence="3">
    <location>
        <position position="337"/>
    </location>
</feature>
<feature type="sequence variant" id="VAR_063054" description="In IFAP1; does not affect subcellular localization; impairs activity; dbSNP:rs122468177." evidence="7">
    <original>M</original>
    <variation>I</variation>
    <location>
        <position position="87"/>
    </location>
</feature>
<feature type="sequence variant" id="VAR_063055" description="In IFAP1; does not affect subcellular localization; impairs activity; dbSNP:rs122468180." evidence="7">
    <original>W</original>
    <variation>L</variation>
    <location>
        <position position="226"/>
    </location>
</feature>
<feature type="sequence variant" id="VAR_063056" description="In IFAP1; does not affect subcellular localization; impairs activity; dbSNP:rs122468176." evidence="7">
    <original>H</original>
    <variation>L</variation>
    <location>
        <position position="227"/>
    </location>
</feature>
<feature type="sequence variant" id="VAR_063057" description="In IFAP1; does not affect subcellular localization; impairs activity; dbSNP:rs122468178." evidence="7">
    <original>R</original>
    <variation>H</variation>
    <location>
        <position position="429"/>
    </location>
</feature>
<feature type="sequence variant" id="VAR_081103" description="In OI19; decreased regulated intramembrane proteolysis resulting in reduced transcriptional activation of genes relevant to osteoblast differentiation and bone formation; dbSNP:rs1555986267." evidence="10">
    <original>N</original>
    <variation>S</variation>
    <location>
        <position position="459"/>
    </location>
</feature>
<feature type="sequence variant" id="VAR_071323" description="In OLMSX; dbSNP:rs587777306." evidence="9">
    <original>F</original>
    <variation>S</variation>
    <location>
        <position position="464"/>
    </location>
</feature>
<feature type="sequence variant" id="VAR_063058" description="In IFAP1; does not affect subcellular localization; impairs activity; dbSNP:rs122468179." evidence="7">
    <original>F</original>
    <variation>S</variation>
    <location>
        <position position="475"/>
    </location>
</feature>
<feature type="sequence variant" id="VAR_081104" description="In OI19; decreased regulated intramembrane proteolysis resulting in reduced transcriptional activation of genes relevant to osteoblast differentiation and bone formation; dbSNP:rs1555986287." evidence="10">
    <original>L</original>
    <variation>F</variation>
    <location>
        <position position="505"/>
    </location>
</feature>
<feature type="sequence variant" id="VAR_064409" description="In KFSDX; sterol responsiveness is reduced by half; dbSNP:rs587776867." evidence="8">
    <original>N</original>
    <variation>S</variation>
    <location>
        <position position="508"/>
    </location>
</feature>
<feature type="mutagenesis site" description="Loss of activity." evidence="11">
    <original>H</original>
    <variation>F</variation>
    <location>
        <position position="171"/>
    </location>
</feature>
<feature type="mutagenesis site" description="Loss of activity." evidence="11">
    <original>E</original>
    <variation>A</variation>
    <variation>Q</variation>
    <location>
        <position position="172"/>
    </location>
</feature>
<feature type="mutagenesis site" description="Partial loss of activity." evidence="11">
    <original>E</original>
    <variation>D</variation>
    <location>
        <position position="172"/>
    </location>
</feature>
<feature type="mutagenesis site" description="Loss of activity." evidence="11">
    <original>H</original>
    <variation>F</variation>
    <location>
        <position position="175"/>
    </location>
</feature>
<feature type="mutagenesis site" description="Loss of activity." evidence="11">
    <original>D</original>
    <variation>N</variation>
    <location>
        <position position="467"/>
    </location>
</feature>
<dbReference type="EC" id="3.4.24.85" evidence="4 5"/>
<dbReference type="EMBL" id="AF019612">
    <property type="protein sequence ID" value="AAC51937.1"/>
    <property type="molecule type" value="mRNA"/>
</dbReference>
<dbReference type="EMBL" id="U73479">
    <property type="protein sequence ID" value="AAD08632.1"/>
    <property type="molecule type" value="Genomic_DNA"/>
</dbReference>
<dbReference type="EMBL" id="U72788">
    <property type="protein sequence ID" value="AAD08631.1"/>
    <property type="molecule type" value="Genomic_DNA"/>
</dbReference>
<dbReference type="CCDS" id="CCDS14201.1"/>
<dbReference type="RefSeq" id="NP_056968.1">
    <property type="nucleotide sequence ID" value="NM_015884.4"/>
</dbReference>
<dbReference type="BioGRID" id="119495">
    <property type="interactions" value="70"/>
</dbReference>
<dbReference type="FunCoup" id="O43462">
    <property type="interactions" value="2392"/>
</dbReference>
<dbReference type="IntAct" id="O43462">
    <property type="interactions" value="8"/>
</dbReference>
<dbReference type="STRING" id="9606.ENSP00000368798"/>
<dbReference type="MEROPS" id="M50.001"/>
<dbReference type="GlyCosmos" id="O43462">
    <property type="glycosylation" value="1 site, No reported glycans"/>
</dbReference>
<dbReference type="GlyGen" id="O43462">
    <property type="glycosylation" value="2 sites, 1 N-linked glycan (1 site)"/>
</dbReference>
<dbReference type="iPTMnet" id="O43462"/>
<dbReference type="PhosphoSitePlus" id="O43462"/>
<dbReference type="BioMuta" id="MBTPS2"/>
<dbReference type="jPOST" id="O43462"/>
<dbReference type="MassIVE" id="O43462"/>
<dbReference type="PaxDb" id="9606-ENSP00000368798"/>
<dbReference type="PeptideAtlas" id="O43462"/>
<dbReference type="ProteomicsDB" id="48956"/>
<dbReference type="Antibodypedia" id="483">
    <property type="antibodies" value="144 antibodies from 29 providers"/>
</dbReference>
<dbReference type="DNASU" id="51360"/>
<dbReference type="Ensembl" id="ENST00000379484.10">
    <property type="protein sequence ID" value="ENSP00000368798.5"/>
    <property type="gene ID" value="ENSG00000012174.12"/>
</dbReference>
<dbReference type="GeneID" id="51360"/>
<dbReference type="KEGG" id="hsa:51360"/>
<dbReference type="MANE-Select" id="ENST00000379484.10">
    <property type="protein sequence ID" value="ENSP00000368798.5"/>
    <property type="RefSeq nucleotide sequence ID" value="NM_015884.4"/>
    <property type="RefSeq protein sequence ID" value="NP_056968.1"/>
</dbReference>
<dbReference type="UCSC" id="uc004dae.4">
    <property type="organism name" value="human"/>
</dbReference>
<dbReference type="AGR" id="HGNC:15455"/>
<dbReference type="CTD" id="51360"/>
<dbReference type="DisGeNET" id="51360"/>
<dbReference type="GeneCards" id="MBTPS2"/>
<dbReference type="HGNC" id="HGNC:15455">
    <property type="gene designation" value="MBTPS2"/>
</dbReference>
<dbReference type="HPA" id="ENSG00000012174">
    <property type="expression patterns" value="Low tissue specificity"/>
</dbReference>
<dbReference type="MalaCards" id="MBTPS2"/>
<dbReference type="MIM" id="300294">
    <property type="type" value="gene"/>
</dbReference>
<dbReference type="MIM" id="300918">
    <property type="type" value="phenotype"/>
</dbReference>
<dbReference type="MIM" id="301014">
    <property type="type" value="phenotype"/>
</dbReference>
<dbReference type="MIM" id="308205">
    <property type="type" value="phenotype"/>
</dbReference>
<dbReference type="MIM" id="308800">
    <property type="type" value="phenotype"/>
</dbReference>
<dbReference type="neXtProt" id="NX_O43462"/>
<dbReference type="OpenTargets" id="ENSG00000012174"/>
<dbReference type="Orphanet" id="85284">
    <property type="disease" value="BRESEK syndrome"/>
</dbReference>
<dbReference type="Orphanet" id="2273">
    <property type="disease" value="Ichthyosis follicularis-alopecia-photophobia syndrome"/>
</dbReference>
<dbReference type="Orphanet" id="2340">
    <property type="disease" value="Keratosis follicularis spinulosa decalvans"/>
</dbReference>
<dbReference type="Orphanet" id="659">
    <property type="disease" value="Mutilating palmoplantar keratoderma with periorificial keratotic plaques"/>
</dbReference>
<dbReference type="Orphanet" id="216796">
    <property type="disease" value="Osteogenesis imperfecta type 1"/>
</dbReference>
<dbReference type="Orphanet" id="216812">
    <property type="disease" value="Osteogenesis imperfecta type 3"/>
</dbReference>
<dbReference type="Orphanet" id="216820">
    <property type="disease" value="Osteogenesis imperfecta type 4"/>
</dbReference>
<dbReference type="PharmGKB" id="PA30672"/>
<dbReference type="VEuPathDB" id="HostDB:ENSG00000012174"/>
<dbReference type="eggNOG" id="KOG2921">
    <property type="taxonomic scope" value="Eukaryota"/>
</dbReference>
<dbReference type="GeneTree" id="ENSGT00510000048066"/>
<dbReference type="HOGENOM" id="CLU_032523_1_0_1"/>
<dbReference type="InParanoid" id="O43462"/>
<dbReference type="OMA" id="FYSWGRW"/>
<dbReference type="OrthoDB" id="69989at2759"/>
<dbReference type="PAN-GO" id="O43462">
    <property type="GO annotations" value="6 GO annotations based on evolutionary models"/>
</dbReference>
<dbReference type="PhylomeDB" id="O43462"/>
<dbReference type="TreeFam" id="TF314478"/>
<dbReference type="BRENDA" id="3.4.24.85">
    <property type="organism ID" value="2681"/>
</dbReference>
<dbReference type="PathwayCommons" id="O43462"/>
<dbReference type="Reactome" id="R-HSA-1655829">
    <property type="pathway name" value="Regulation of cholesterol biosynthesis by SREBP (SREBF)"/>
</dbReference>
<dbReference type="Reactome" id="R-HSA-381033">
    <property type="pathway name" value="ATF6 (ATF6-alpha) activates chaperones"/>
</dbReference>
<dbReference type="Reactome" id="R-HSA-8874177">
    <property type="pathway name" value="ATF6B (ATF6-beta) activates chaperones"/>
</dbReference>
<dbReference type="Reactome" id="R-HSA-8874211">
    <property type="pathway name" value="CREB3 factors activate genes"/>
</dbReference>
<dbReference type="Reactome" id="R-HSA-8963889">
    <property type="pathway name" value="Assembly of active LPL and LIPC lipase complexes"/>
</dbReference>
<dbReference type="SignaLink" id="O43462"/>
<dbReference type="SIGNOR" id="O43462"/>
<dbReference type="BioGRID-ORCS" id="51360">
    <property type="hits" value="217 hits in 802 CRISPR screens"/>
</dbReference>
<dbReference type="ChiTaRS" id="MBTPS2">
    <property type="organism name" value="human"/>
</dbReference>
<dbReference type="GenomeRNAi" id="51360"/>
<dbReference type="Pharos" id="O43462">
    <property type="development level" value="Tbio"/>
</dbReference>
<dbReference type="PRO" id="PR:O43462"/>
<dbReference type="Proteomes" id="UP000005640">
    <property type="component" value="Chromosome X"/>
</dbReference>
<dbReference type="RNAct" id="O43462">
    <property type="molecule type" value="protein"/>
</dbReference>
<dbReference type="Bgee" id="ENSG00000012174">
    <property type="expression patterns" value="Expressed in endothelial cell and 185 other cell types or tissues"/>
</dbReference>
<dbReference type="ExpressionAtlas" id="O43462">
    <property type="expression patterns" value="baseline and differential"/>
</dbReference>
<dbReference type="GO" id="GO:0005737">
    <property type="term" value="C:cytoplasm"/>
    <property type="evidence" value="ECO:0000314"/>
    <property type="project" value="UniProtKB"/>
</dbReference>
<dbReference type="GO" id="GO:0000139">
    <property type="term" value="C:Golgi membrane"/>
    <property type="evidence" value="ECO:0000250"/>
    <property type="project" value="UniProt"/>
</dbReference>
<dbReference type="GO" id="GO:0016020">
    <property type="term" value="C:membrane"/>
    <property type="evidence" value="ECO:0000304"/>
    <property type="project" value="ProtInc"/>
</dbReference>
<dbReference type="GO" id="GO:0046872">
    <property type="term" value="F:metal ion binding"/>
    <property type="evidence" value="ECO:0007669"/>
    <property type="project" value="UniProtKB-KW"/>
</dbReference>
<dbReference type="GO" id="GO:0004222">
    <property type="term" value="F:metalloendopeptidase activity"/>
    <property type="evidence" value="ECO:0000314"/>
    <property type="project" value="UniProt"/>
</dbReference>
<dbReference type="GO" id="GO:0140537">
    <property type="term" value="F:transcription regulator activator activity"/>
    <property type="evidence" value="ECO:0000316"/>
    <property type="project" value="ParkinsonsUK-UCL"/>
</dbReference>
<dbReference type="GO" id="GO:0036500">
    <property type="term" value="P:ATF6-mediated unfolded protein response"/>
    <property type="evidence" value="ECO:0000304"/>
    <property type="project" value="ParkinsonsUK-UCL"/>
</dbReference>
<dbReference type="GO" id="GO:0070977">
    <property type="term" value="P:bone maturation"/>
    <property type="evidence" value="ECO:0000315"/>
    <property type="project" value="UniProtKB"/>
</dbReference>
<dbReference type="GO" id="GO:0008203">
    <property type="term" value="P:cholesterol metabolic process"/>
    <property type="evidence" value="ECO:0000304"/>
    <property type="project" value="ProtInc"/>
</dbReference>
<dbReference type="GO" id="GO:0030968">
    <property type="term" value="P:endoplasmic reticulum unfolded protein response"/>
    <property type="evidence" value="ECO:0000304"/>
    <property type="project" value="Reactome"/>
</dbReference>
<dbReference type="GO" id="GO:0031293">
    <property type="term" value="P:membrane protein intracellular domain proteolysis"/>
    <property type="evidence" value="ECO:0000316"/>
    <property type="project" value="ParkinsonsUK-UCL"/>
</dbReference>
<dbReference type="GO" id="GO:0007095">
    <property type="term" value="P:mitotic G2 DNA damage checkpoint signaling"/>
    <property type="evidence" value="ECO:0007669"/>
    <property type="project" value="Ensembl"/>
</dbReference>
<dbReference type="GO" id="GO:0045542">
    <property type="term" value="P:positive regulation of cholesterol biosynthetic process"/>
    <property type="evidence" value="ECO:0000314"/>
    <property type="project" value="UniProt"/>
</dbReference>
<dbReference type="GO" id="GO:0045944">
    <property type="term" value="P:positive regulation of transcription by RNA polymerase II"/>
    <property type="evidence" value="ECO:0000316"/>
    <property type="project" value="ParkinsonsUK-UCL"/>
</dbReference>
<dbReference type="GO" id="GO:0051604">
    <property type="term" value="P:protein maturation"/>
    <property type="evidence" value="ECO:0000314"/>
    <property type="project" value="UniProt"/>
</dbReference>
<dbReference type="GO" id="GO:0045540">
    <property type="term" value="P:regulation of cholesterol biosynthetic process"/>
    <property type="evidence" value="ECO:0000304"/>
    <property type="project" value="Reactome"/>
</dbReference>
<dbReference type="GO" id="GO:1905897">
    <property type="term" value="P:regulation of response to endoplasmic reticulum stress"/>
    <property type="evidence" value="ECO:0000318"/>
    <property type="project" value="GO_Central"/>
</dbReference>
<dbReference type="GO" id="GO:0034976">
    <property type="term" value="P:response to endoplasmic reticulum stress"/>
    <property type="evidence" value="ECO:0000316"/>
    <property type="project" value="ParkinsonsUK-UCL"/>
</dbReference>
<dbReference type="CDD" id="cd06775">
    <property type="entry name" value="cpPDZ_MBTPS2-like"/>
    <property type="match status" value="1"/>
</dbReference>
<dbReference type="CDD" id="cd06162">
    <property type="entry name" value="S2P-M50_PDZ_SREBP"/>
    <property type="match status" value="1"/>
</dbReference>
<dbReference type="Gene3D" id="2.30.42.10">
    <property type="match status" value="1"/>
</dbReference>
<dbReference type="InterPro" id="IPR001193">
    <property type="entry name" value="MBTPS2"/>
</dbReference>
<dbReference type="InterPro" id="IPR036034">
    <property type="entry name" value="PDZ_sf"/>
</dbReference>
<dbReference type="InterPro" id="IPR008915">
    <property type="entry name" value="Peptidase_M50"/>
</dbReference>
<dbReference type="PANTHER" id="PTHR13325:SF3">
    <property type="entry name" value="MEMBRANE-BOUND TRANSCRIPTION FACTOR SITE-2 PROTEASE"/>
    <property type="match status" value="1"/>
</dbReference>
<dbReference type="PANTHER" id="PTHR13325">
    <property type="entry name" value="PROTEASE M50 MEMBRANE-BOUND TRANSCRIPTION FACTOR SITE 2 PROTEASE"/>
    <property type="match status" value="1"/>
</dbReference>
<dbReference type="Pfam" id="PF02163">
    <property type="entry name" value="Peptidase_M50"/>
    <property type="match status" value="1"/>
</dbReference>
<dbReference type="PRINTS" id="PR01000">
    <property type="entry name" value="SREBPS2PTASE"/>
</dbReference>
<dbReference type="SUPFAM" id="SSF50156">
    <property type="entry name" value="PDZ domain-like"/>
    <property type="match status" value="1"/>
</dbReference>
<dbReference type="PROSITE" id="PS00142">
    <property type="entry name" value="ZINC_PROTEASE"/>
    <property type="match status" value="1"/>
</dbReference>
<accession>O43462</accession>
<accession>Q9UM70</accession>
<accession>Q9UMD3</accession>
<sequence>MIPVSLVVVVVGGWTVVYLTDLVLKSSVYFKHSYEDWLENNGLSISPFHIRWQTAVFNRAFYSWGRRKARMLYQWFNFGMVFGVIAMFSSFFLLGKTLMQTLAQMMADSPSSYSSSSSSSSSSSSSSSSSSSSSSSLHNEQVLQVVVPGINLPVNQLTYFFTAVLISGVVHEIGHGIAAIREQVRFNGFGIFLFIIYPGAFVDLFTTHLQLISPVQQLRIFCAGIWHNFVLALLGILALVLLPVILLPFYYTGVGVLITEVAEDSPAIGPRGLFVGDLVTHLQDCPVTNVQDWNECLDTIAYEPQIGYCISASTLQQLSFPVRAYKRLDGSTECCNNHSLTDVCFSYRNNFNKRLHTCLPARKAVEATQVCRTNKDCKKSSSSSFCIIPSLETHTRLIKVKHPPQIDMLYVGHPLHLHYTVSITSFIPRFNFLSIDLPVVVETFVKYLISLSGALAIVNAVPCFALDGQWILNSFLDATLTSVIGDNDVKDLIGFFILLGGSVLLAANVTLGLWMVTAR</sequence>
<reference key="1">
    <citation type="journal article" date="1997" name="Mol. Cell">
        <title>Complementation cloning of S2P, a gene encoding a putative metalloprotease required for intramembrane cleavage of SREBPs.</title>
        <authorList>
            <person name="Rawson R.B."/>
            <person name="Zelenski N.G."/>
            <person name="Nijhawan D."/>
            <person name="Ye J."/>
            <person name="Sakai J."/>
            <person name="Hasan M.T."/>
            <person name="Chang T.Y."/>
            <person name="Brown M.S."/>
            <person name="Goldstein J.L."/>
        </authorList>
    </citation>
    <scope>NUCLEOTIDE SEQUENCE [MRNA]</scope>
    <scope>FUNCTION</scope>
    <scope>TISSUE SPECIFICITY</scope>
    <scope>MUTAGENESIS OF HIS-171; GLU-172; HIS-175 AND ASP-467</scope>
    <source>
        <tissue>Fibroblast</tissue>
    </source>
</reference>
<reference key="2">
    <citation type="journal article" date="2005" name="Nature">
        <title>The DNA sequence of the human X chromosome.</title>
        <authorList>
            <person name="Ross M.T."/>
            <person name="Grafham D.V."/>
            <person name="Coffey A.J."/>
            <person name="Scherer S."/>
            <person name="McLay K."/>
            <person name="Muzny D."/>
            <person name="Platzer M."/>
            <person name="Howell G.R."/>
            <person name="Burrows C."/>
            <person name="Bird C.P."/>
            <person name="Frankish A."/>
            <person name="Lovell F.L."/>
            <person name="Howe K.L."/>
            <person name="Ashurst J.L."/>
            <person name="Fulton R.S."/>
            <person name="Sudbrak R."/>
            <person name="Wen G."/>
            <person name="Jones M.C."/>
            <person name="Hurles M.E."/>
            <person name="Andrews T.D."/>
            <person name="Scott C.E."/>
            <person name="Searle S."/>
            <person name="Ramser J."/>
            <person name="Whittaker A."/>
            <person name="Deadman R."/>
            <person name="Carter N.P."/>
            <person name="Hunt S.E."/>
            <person name="Chen R."/>
            <person name="Cree A."/>
            <person name="Gunaratne P."/>
            <person name="Havlak P."/>
            <person name="Hodgson A."/>
            <person name="Metzker M.L."/>
            <person name="Richards S."/>
            <person name="Scott G."/>
            <person name="Steffen D."/>
            <person name="Sodergren E."/>
            <person name="Wheeler D.A."/>
            <person name="Worley K.C."/>
            <person name="Ainscough R."/>
            <person name="Ambrose K.D."/>
            <person name="Ansari-Lari M.A."/>
            <person name="Aradhya S."/>
            <person name="Ashwell R.I."/>
            <person name="Babbage A.K."/>
            <person name="Bagguley C.L."/>
            <person name="Ballabio A."/>
            <person name="Banerjee R."/>
            <person name="Barker G.E."/>
            <person name="Barlow K.F."/>
            <person name="Barrett I.P."/>
            <person name="Bates K.N."/>
            <person name="Beare D.M."/>
            <person name="Beasley H."/>
            <person name="Beasley O."/>
            <person name="Beck A."/>
            <person name="Bethel G."/>
            <person name="Blechschmidt K."/>
            <person name="Brady N."/>
            <person name="Bray-Allen S."/>
            <person name="Bridgeman A.M."/>
            <person name="Brown A.J."/>
            <person name="Brown M.J."/>
            <person name="Bonnin D."/>
            <person name="Bruford E.A."/>
            <person name="Buhay C."/>
            <person name="Burch P."/>
            <person name="Burford D."/>
            <person name="Burgess J."/>
            <person name="Burrill W."/>
            <person name="Burton J."/>
            <person name="Bye J.M."/>
            <person name="Carder C."/>
            <person name="Carrel L."/>
            <person name="Chako J."/>
            <person name="Chapman J.C."/>
            <person name="Chavez D."/>
            <person name="Chen E."/>
            <person name="Chen G."/>
            <person name="Chen Y."/>
            <person name="Chen Z."/>
            <person name="Chinault C."/>
            <person name="Ciccodicola A."/>
            <person name="Clark S.Y."/>
            <person name="Clarke G."/>
            <person name="Clee C.M."/>
            <person name="Clegg S."/>
            <person name="Clerc-Blankenburg K."/>
            <person name="Clifford K."/>
            <person name="Cobley V."/>
            <person name="Cole C.G."/>
            <person name="Conquer J.S."/>
            <person name="Corby N."/>
            <person name="Connor R.E."/>
            <person name="David R."/>
            <person name="Davies J."/>
            <person name="Davis C."/>
            <person name="Davis J."/>
            <person name="Delgado O."/>
            <person name="Deshazo D."/>
            <person name="Dhami P."/>
            <person name="Ding Y."/>
            <person name="Dinh H."/>
            <person name="Dodsworth S."/>
            <person name="Draper H."/>
            <person name="Dugan-Rocha S."/>
            <person name="Dunham A."/>
            <person name="Dunn M."/>
            <person name="Durbin K.J."/>
            <person name="Dutta I."/>
            <person name="Eades T."/>
            <person name="Ellwood M."/>
            <person name="Emery-Cohen A."/>
            <person name="Errington H."/>
            <person name="Evans K.L."/>
            <person name="Faulkner L."/>
            <person name="Francis F."/>
            <person name="Frankland J."/>
            <person name="Fraser A.E."/>
            <person name="Galgoczy P."/>
            <person name="Gilbert J."/>
            <person name="Gill R."/>
            <person name="Gloeckner G."/>
            <person name="Gregory S.G."/>
            <person name="Gribble S."/>
            <person name="Griffiths C."/>
            <person name="Grocock R."/>
            <person name="Gu Y."/>
            <person name="Gwilliam R."/>
            <person name="Hamilton C."/>
            <person name="Hart E.A."/>
            <person name="Hawes A."/>
            <person name="Heath P.D."/>
            <person name="Heitmann K."/>
            <person name="Hennig S."/>
            <person name="Hernandez J."/>
            <person name="Hinzmann B."/>
            <person name="Ho S."/>
            <person name="Hoffs M."/>
            <person name="Howden P.J."/>
            <person name="Huckle E.J."/>
            <person name="Hume J."/>
            <person name="Hunt P.J."/>
            <person name="Hunt A.R."/>
            <person name="Isherwood J."/>
            <person name="Jacob L."/>
            <person name="Johnson D."/>
            <person name="Jones S."/>
            <person name="de Jong P.J."/>
            <person name="Joseph S.S."/>
            <person name="Keenan S."/>
            <person name="Kelly S."/>
            <person name="Kershaw J.K."/>
            <person name="Khan Z."/>
            <person name="Kioschis P."/>
            <person name="Klages S."/>
            <person name="Knights A.J."/>
            <person name="Kosiura A."/>
            <person name="Kovar-Smith C."/>
            <person name="Laird G.K."/>
            <person name="Langford C."/>
            <person name="Lawlor S."/>
            <person name="Leversha M."/>
            <person name="Lewis L."/>
            <person name="Liu W."/>
            <person name="Lloyd C."/>
            <person name="Lloyd D.M."/>
            <person name="Loulseged H."/>
            <person name="Loveland J.E."/>
            <person name="Lovell J.D."/>
            <person name="Lozado R."/>
            <person name="Lu J."/>
            <person name="Lyne R."/>
            <person name="Ma J."/>
            <person name="Maheshwari M."/>
            <person name="Matthews L.H."/>
            <person name="McDowall J."/>
            <person name="McLaren S."/>
            <person name="McMurray A."/>
            <person name="Meidl P."/>
            <person name="Meitinger T."/>
            <person name="Milne S."/>
            <person name="Miner G."/>
            <person name="Mistry S.L."/>
            <person name="Morgan M."/>
            <person name="Morris S."/>
            <person name="Mueller I."/>
            <person name="Mullikin J.C."/>
            <person name="Nguyen N."/>
            <person name="Nordsiek G."/>
            <person name="Nyakatura G."/>
            <person name="O'dell C.N."/>
            <person name="Okwuonu G."/>
            <person name="Palmer S."/>
            <person name="Pandian R."/>
            <person name="Parker D."/>
            <person name="Parrish J."/>
            <person name="Pasternak S."/>
            <person name="Patel D."/>
            <person name="Pearce A.V."/>
            <person name="Pearson D.M."/>
            <person name="Pelan S.E."/>
            <person name="Perez L."/>
            <person name="Porter K.M."/>
            <person name="Ramsey Y."/>
            <person name="Reichwald K."/>
            <person name="Rhodes S."/>
            <person name="Ridler K.A."/>
            <person name="Schlessinger D."/>
            <person name="Schueler M.G."/>
            <person name="Sehra H.K."/>
            <person name="Shaw-Smith C."/>
            <person name="Shen H."/>
            <person name="Sheridan E.M."/>
            <person name="Shownkeen R."/>
            <person name="Skuce C.D."/>
            <person name="Smith M.L."/>
            <person name="Sotheran E.C."/>
            <person name="Steingruber H.E."/>
            <person name="Steward C.A."/>
            <person name="Storey R."/>
            <person name="Swann R.M."/>
            <person name="Swarbreck D."/>
            <person name="Tabor P.E."/>
            <person name="Taudien S."/>
            <person name="Taylor T."/>
            <person name="Teague B."/>
            <person name="Thomas K."/>
            <person name="Thorpe A."/>
            <person name="Timms K."/>
            <person name="Tracey A."/>
            <person name="Trevanion S."/>
            <person name="Tromans A.C."/>
            <person name="d'Urso M."/>
            <person name="Verduzco D."/>
            <person name="Villasana D."/>
            <person name="Waldron L."/>
            <person name="Wall M."/>
            <person name="Wang Q."/>
            <person name="Warren J."/>
            <person name="Warry G.L."/>
            <person name="Wei X."/>
            <person name="West A."/>
            <person name="Whitehead S.L."/>
            <person name="Whiteley M.N."/>
            <person name="Wilkinson J.E."/>
            <person name="Willey D.L."/>
            <person name="Williams G."/>
            <person name="Williams L."/>
            <person name="Williamson A."/>
            <person name="Williamson H."/>
            <person name="Wilming L."/>
            <person name="Woodmansey R.L."/>
            <person name="Wray P.W."/>
            <person name="Yen J."/>
            <person name="Zhang J."/>
            <person name="Zhou J."/>
            <person name="Zoghbi H."/>
            <person name="Zorilla S."/>
            <person name="Buck D."/>
            <person name="Reinhardt R."/>
            <person name="Poustka A."/>
            <person name="Rosenthal A."/>
            <person name="Lehrach H."/>
            <person name="Meindl A."/>
            <person name="Minx P.J."/>
            <person name="Hillier L.W."/>
            <person name="Willard H.F."/>
            <person name="Wilson R.K."/>
            <person name="Waterston R.H."/>
            <person name="Rice C.M."/>
            <person name="Vaudin M."/>
            <person name="Coulson A."/>
            <person name="Nelson D.L."/>
            <person name="Weinstock G."/>
            <person name="Sulston J.E."/>
            <person name="Durbin R.M."/>
            <person name="Hubbard T."/>
            <person name="Gibbs R.A."/>
            <person name="Beck S."/>
            <person name="Rogers J."/>
            <person name="Bentley D.R."/>
        </authorList>
    </citation>
    <scope>NUCLEOTIDE SEQUENCE [LARGE SCALE GENOMIC DNA]</scope>
</reference>
<reference key="3">
    <citation type="journal article" date="1999" name="J. Biol. Chem.">
        <title>Membrane topology of S2P, a protein required for intramembranous cleavage of sterol regulatory element-binding proteins.</title>
        <authorList>
            <person name="Zelenski N.G."/>
            <person name="Rawson R.B."/>
            <person name="Brown M.S."/>
            <person name="Goldstein J.L."/>
        </authorList>
    </citation>
    <scope>TOPOLOGY</scope>
    <scope>GLYCOSYLATION AT ASN-337</scope>
</reference>
<reference key="4">
    <citation type="journal article" date="2000" name="Mol. Cell">
        <title>ER stress induces cleavage of membrane-bound ATF6 by the same proteases that process SREBPs.</title>
        <authorList>
            <person name="Ye J."/>
            <person name="Rawson R.B."/>
            <person name="Komuro R."/>
            <person name="Chen X."/>
            <person name="Dave U.P."/>
            <person name="Prywes R."/>
            <person name="Brown M.S."/>
            <person name="Goldstein J.L."/>
        </authorList>
    </citation>
    <scope>FUNCTION</scope>
    <scope>CATALYTIC ACTIVITY</scope>
</reference>
<reference key="5">
    <citation type="journal article" date="2000" name="Proc. Natl. Acad. Sci. U.S.A.">
        <title>Asparagine-proline sequence within membrane-spanning segment of SREBP triggers intramembrane cleavage by site-2 protease.</title>
        <authorList>
            <person name="Ye J."/>
            <person name="Dave U.P."/>
            <person name="Grishin N.V."/>
            <person name="Goldstein J.L."/>
            <person name="Brown M.S."/>
        </authorList>
    </citation>
    <scope>FUNCTION</scope>
    <scope>CATALYTIC ACTIVITY</scope>
    <scope>COFACTOR</scope>
</reference>
<reference key="6">
    <citation type="journal article" date="2006" name="J. Neurochem.">
        <title>Cleavage of the membrane-bound transcription factor OASIS in response to endoplasmic reticulum stress.</title>
        <authorList>
            <person name="Murakami T."/>
            <person name="Kondo S."/>
            <person name="Ogata M."/>
            <person name="Kanemoto S."/>
            <person name="Saito A."/>
            <person name="Wanaka A."/>
            <person name="Imaizumi K."/>
        </authorList>
    </citation>
    <scope>FUNCTION</scope>
    <scope>SUBCELLULAR LOCATION</scope>
</reference>
<reference key="7">
    <citation type="journal article" date="2009" name="Am. J. Hum. Genet.">
        <title>IFAP syndrome is caused by deficiency in MBTPS2, an intramembrane zinc metalloprotease essential for cholesterol homeostasis and ER stress response.</title>
        <authorList>
            <person name="Oeffner F."/>
            <person name="Fischer G."/>
            <person name="Happle R."/>
            <person name="Konig A."/>
            <person name="Betz R.C."/>
            <person name="Bornholdt D."/>
            <person name="Neidel U."/>
            <person name="Boente Mdel C."/>
            <person name="Redler S."/>
            <person name="Romero-Gomez J."/>
            <person name="Salhi A."/>
            <person name="Vera-Casano A."/>
            <person name="Weirich C."/>
            <person name="Grzeschik K.H."/>
        </authorList>
    </citation>
    <scope>SUBCELLULAR LOCATION</scope>
    <scope>VARIANTS IFAP1 ILE-87; LEU-226; LEU-227; HIS-429 AND SER-475</scope>
    <scope>CHARACTERIZATION OF VARIANTS IFAP1 ILE-87; LEU-226; LEU-227; HIS-429 AND SER-475</scope>
</reference>
<reference key="8">
    <citation type="journal article" date="2010" name="Hum. Mutat.">
        <title>Keratosis follicularis spinulosa decalvans is caused by mutations in MBTPS2.</title>
        <authorList>
            <person name="Aten E."/>
            <person name="Brasz L.C."/>
            <person name="Bornholdt D."/>
            <person name="Hooijkaas I.B."/>
            <person name="Porteous M.E."/>
            <person name="Sybert V.P."/>
            <person name="Vermeer M.H."/>
            <person name="Vossen R.H."/>
            <person name="van der Wielen M.J."/>
            <person name="Bakker E."/>
            <person name="Breuning M.H."/>
            <person name="Grzeschik K.H."/>
            <person name="Oosterwijk J.C."/>
            <person name="den Dunnen J.T."/>
        </authorList>
    </citation>
    <scope>VARIANT KFSDX SER-508</scope>
    <scope>CHARACTERIZATION OF VARIANT KFSDX SER-508</scope>
</reference>
<reference key="9">
    <citation type="journal article" date="2013" name="J. Invest. Dermatol.">
        <title>A missense mutation in the MBTPS2 gene underlies the X-linked form of Olmsted syndrome.</title>
        <authorList>
            <person name="Haghighi A."/>
            <person name="Scott C.A."/>
            <person name="Poon D.S."/>
            <person name="Yaghoobi R."/>
            <person name="Saleh-Gohari N."/>
            <person name="Plagnol V."/>
            <person name="Kelsell D.P."/>
        </authorList>
    </citation>
    <scope>INVOLVEMENT IN OLMSX</scope>
    <scope>VARIANT OLMSX SER-464</scope>
</reference>
<reference key="10">
    <citation type="journal article" date="2016" name="Nat. Commun.">
        <title>MBTPS2 mutations cause defective regulated intramembrane proteolysis in X-linked osteogenesis imperfecta.</title>
        <authorList>
            <person name="Lindert U."/>
            <person name="Cabral W.A."/>
            <person name="Ausavarat S."/>
            <person name="Tongkobpetch S."/>
            <person name="Ludin K."/>
            <person name="Barnes A.M."/>
            <person name="Yeetong P."/>
            <person name="Weis M."/>
            <person name="Krabichler B."/>
            <person name="Srichomthong C."/>
            <person name="Makareeva E.N."/>
            <person name="Janecke A.R."/>
            <person name="Leikin S."/>
            <person name="Roethlisberger B."/>
            <person name="Rohrbach M."/>
            <person name="Kennerknecht I."/>
            <person name="Eyre D.R."/>
            <person name="Suphapeetiporn K."/>
            <person name="Giunta C."/>
            <person name="Marini J.C."/>
            <person name="Shotelersuk V."/>
        </authorList>
    </citation>
    <scope>FUNCTION</scope>
    <scope>INVOLVEMENT IN OI19</scope>
    <scope>VARIANTS OI19 SER-459 AND PHE-505</scope>
    <scope>CHARACTERIZATION OF VARIANTS OI19 SER-459 AND PHE-505</scope>
</reference>
<protein>
    <recommendedName>
        <fullName evidence="15">Membrane-bound transcription factor site-2 protease</fullName>
        <ecNumber evidence="4 5">3.4.24.85</ecNumber>
    </recommendedName>
    <alternativeName>
        <fullName evidence="14">Endopeptidase S2P</fullName>
    </alternativeName>
    <alternativeName>
        <fullName evidence="14">Sterol regulatory element-binding proteins intramembrane protease</fullName>
        <shortName evidence="14">SREBPs intramembrane protease</shortName>
    </alternativeName>
</protein>
<comment type="function">
    <text evidence="4 5 6 10 11">Zinc metalloprotease that mediates intramembrane proteolysis of proteins such as ATF6, ATF6B, SREBF1/SREBP1 and SREBF2/SREBP2 (PubMed:10805775, PubMed:11163209). Catalyzes the second step in the proteolytic activation of the sterol regulatory element-binding proteins (SREBPs) SREBF1/SREBP1 and SREBF2/SREBP2: cleaves SREBPs within the first transmembrane segment, thereby releasing the N-terminal segment with a portion of the transmembrane segment attached (PubMed:10805775, PubMed:27380894, PubMed:9659902). Mature N-terminal SREBP fragments shuttle to the nucleus and activate gene transcription (PubMed:10805775, PubMed:27380894, PubMed:9659902). Also mediates the second step in the proteolytic activation of the cyclic AMP-dependent transcription factor ATF-6 (ATF6 and ATF6B) (PubMed:11163209). Involved in intramembrane proteolysis during bone formation (PubMed:27380894). In astrocytes and osteoblasts, upon DNA damage and ER stress, mediates the second step of the regulated intramembrane proteolytic activation of the transcription factor CREB3L1, leading to the inhibition of cell-cycle progression (PubMed:16417584).</text>
</comment>
<comment type="catalytic activity">
    <reaction evidence="4 5">
        <text>Cleaves several transcription factors that are type-2 transmembrane proteins within membrane-spanning domains. Known substrates include sterol regulatory element-binding protein (SREBP) -1, SREBP-2 and forms of the transcriptional activator ATF6. SREBP-2 is cleaved at the site 477-DRSRILL-|-CVLTFLCLSFNPLTSLLQWGGA-505. The residues Asn-Pro, 11 residues distal to the site of cleavage in the membrane-spanning domain, are important for cleavage by S2P endopeptidase. Replacement of either of these residues does not prevent cleavage, but there is no cleavage if both of these residues are replaced.</text>
        <dbReference type="EC" id="3.4.24.85"/>
    </reaction>
</comment>
<comment type="cofactor">
    <cofactor evidence="4">
        <name>Zn(2+)</name>
        <dbReference type="ChEBI" id="CHEBI:29105"/>
    </cofactor>
    <text evidence="4">Binds 1 zinc ion per subunit.</text>
</comment>
<comment type="subcellular location">
    <subcellularLocation>
        <location evidence="18">Membrane</location>
        <topology evidence="1">Multi-pass membrane protein</topology>
    </subcellularLocation>
    <subcellularLocation>
        <location evidence="7">Cytoplasm</location>
    </subcellularLocation>
    <subcellularLocation>
        <location evidence="17">Golgi apparatus membrane</location>
        <topology evidence="1">Multi-pass membrane protein</topology>
    </subcellularLocation>
</comment>
<comment type="tissue specificity">
    <text evidence="11">Expressed in heart, brain, placenta, lung, liver, muscle, kidney and pancreas.</text>
</comment>
<comment type="disease" evidence="7">
    <disease id="DI-02540">
        <name>IFAP syndrome 1, with or without Bresheck syndrome</name>
        <acronym>IFAP1</acronym>
        <description>An X-linked syndrome characterized by a peculiar triad of follicular ichthyosis, total or subtotal atrichia, and photophobia of varying degree. Histopathologically, the epidermal granular layer is generally well-preserved or thickened at the infundibulum. Hair follicles are poorly developed and tend to be surrounded by an inflammatory infiltrate. A subgroup of patients is described with lamellar rather than follicular ichthyosis. Non-consistent features may include growth and psychomotor retardation, aganglionic megacolon, seizures and nail dystrophy.</description>
        <dbReference type="MIM" id="308205"/>
    </disease>
    <text>The disease is caused by variants affecting the gene represented in this entry.</text>
</comment>
<comment type="disease" evidence="9">
    <disease id="DI-04106">
        <name>Olmsted syndrome, X-linked</name>
        <acronym>OLMSX</acronym>
        <description>A rare congenital disorder characterized by bilateral mutilating palmoplantar keratoderma and periorificial keratotic plaques with severe itching at all lesions. Diffuse alopecia, constriction of digits, and onychodystrophy have also been reported. Infections and squamous cell carcinomas can arise on the keratotic areas. The digital constriction may progress to autoamputation of fingers and toes.</description>
        <dbReference type="MIM" id="300918"/>
    </disease>
    <text>The disease is caused by variants affecting the gene represented in this entry.</text>
</comment>
<comment type="disease" evidence="8">
    <disease id="DI-01862">
        <name>Keratosis follicularis spinulosa decalvans X-linked</name>
        <acronym>KFSDX</acronym>
        <description>A rare disorder affecting the skin and the eye. Affected men show thickening of the skin of the neck, ears, and extremities, especially the palms and soles, loss of eyebrows, eyelashes and beard, thickening of the eyelids with blepharitis and ectropion, and corneal degeneration.</description>
        <dbReference type="MIM" id="308800"/>
    </disease>
    <text>The disease is caused by variants affecting the gene represented in this entry.</text>
</comment>
<comment type="disease" evidence="10">
    <disease id="DI-05299">
        <name>Osteogenesis imperfecta 19</name>
        <acronym>OI19</acronym>
        <description>An X-linked form of osteogenesis imperfecta, a disorder of bone formation characterized by low bone mass, bone fragility and susceptibility to fractures after minimal trauma. Disease severity ranges from very mild forms without fractures to intrauterine fractures and perinatal lethality. Extraskeletal manifestations, which affect a variable number of patients, are dentinogenesis imperfecta, hearing loss, and blue sclerae. OI19 is characterized by prenatal fractures, short stature, white sclerae, variable scoliosis and pectal deformity, striking tibial anterior angulation and generalized osteopenia.</description>
        <dbReference type="MIM" id="301014"/>
    </disease>
    <text>The disease is caused by variants affecting the gene represented in this entry.</text>
</comment>
<comment type="similarity">
    <text evidence="15">Belongs to the peptidase M50A family.</text>
</comment>